<feature type="signal peptide" evidence="1">
    <location>
        <begin position="1"/>
        <end position="19"/>
    </location>
</feature>
<feature type="chain" id="PRO_0000268847" description="Uncharacterized protein RC0398">
    <location>
        <begin position="20"/>
        <end position="295"/>
    </location>
</feature>
<feature type="region of interest" description="Disordered" evidence="2">
    <location>
        <begin position="275"/>
        <end position="295"/>
    </location>
</feature>
<feature type="compositionally biased region" description="Low complexity" evidence="2">
    <location>
        <begin position="276"/>
        <end position="295"/>
    </location>
</feature>
<reference key="1">
    <citation type="journal article" date="2001" name="Science">
        <title>Mechanisms of evolution in Rickettsia conorii and R. prowazekii.</title>
        <authorList>
            <person name="Ogata H."/>
            <person name="Audic S."/>
            <person name="Renesto-Audiffren P."/>
            <person name="Fournier P.-E."/>
            <person name="Barbe V."/>
            <person name="Samson D."/>
            <person name="Roux V."/>
            <person name="Cossart P."/>
            <person name="Weissenbach J."/>
            <person name="Claverie J.-M."/>
            <person name="Raoult D."/>
        </authorList>
    </citation>
    <scope>NUCLEOTIDE SEQUENCE [LARGE SCALE GENOMIC DNA]</scope>
    <source>
        <strain>ATCC VR-613 / Malish 7</strain>
    </source>
</reference>
<organism>
    <name type="scientific">Rickettsia conorii (strain ATCC VR-613 / Malish 7)</name>
    <dbReference type="NCBI Taxonomy" id="272944"/>
    <lineage>
        <taxon>Bacteria</taxon>
        <taxon>Pseudomonadati</taxon>
        <taxon>Pseudomonadota</taxon>
        <taxon>Alphaproteobacteria</taxon>
        <taxon>Rickettsiales</taxon>
        <taxon>Rickettsiaceae</taxon>
        <taxon>Rickettsieae</taxon>
        <taxon>Rickettsia</taxon>
        <taxon>spotted fever group</taxon>
    </lineage>
</organism>
<protein>
    <recommendedName>
        <fullName>Uncharacterized protein RC0398</fullName>
    </recommendedName>
</protein>
<sequence length="295" mass="34311">MFKKYIFILILFIASIARAEIIEVDSLNKIKQDFKENYNKNYVPQDLLVVTVLDEFLFKSLVPIVTQLDKDIYLTTLTPLLRNINKNSKTIYIKQLILTNDSYKKELQESDFPNFVNEISNSKIPIIAVNDGFTGNFNNIPKFEIWFADYLKKNFDIDFSNSFPNNNYIIFNNLDSFANTYPVFYKGILTSNNISEAEMMLNFLIQMNFIPKCFIMISSSIELLSSMELQLSSYSSNILFIGYHYNNKNTPKNKDVAYYTKLINDLISQINKLKRNNPPLKNNNAKGKNPYDTNK</sequence>
<name>Y398_RICCN</name>
<evidence type="ECO:0000255" key="1"/>
<evidence type="ECO:0000256" key="2">
    <source>
        <dbReference type="SAM" id="MobiDB-lite"/>
    </source>
</evidence>
<keyword id="KW-0732">Signal</keyword>
<dbReference type="EMBL" id="AE006914">
    <property type="protein sequence ID" value="AAL02936.1"/>
    <property type="molecule type" value="Genomic_DNA"/>
</dbReference>
<dbReference type="PIR" id="F97749">
    <property type="entry name" value="F97749"/>
</dbReference>
<dbReference type="RefSeq" id="WP_010977052.1">
    <property type="nucleotide sequence ID" value="NC_003103.1"/>
</dbReference>
<dbReference type="GeneID" id="928576"/>
<dbReference type="KEGG" id="rco:RC0398"/>
<dbReference type="PATRIC" id="fig|272944.4.peg.453"/>
<dbReference type="HOGENOM" id="CLU_946219_0_0_5"/>
<dbReference type="Proteomes" id="UP000000816">
    <property type="component" value="Chromosome"/>
</dbReference>
<dbReference type="InterPro" id="IPR022565">
    <property type="entry name" value="DUF2608"/>
</dbReference>
<dbReference type="Pfam" id="PF11019">
    <property type="entry name" value="DUF2608"/>
    <property type="match status" value="1"/>
</dbReference>
<gene>
    <name type="ordered locus">RC0398</name>
</gene>
<accession>Q92IM2</accession>
<proteinExistence type="inferred from homology"/>